<comment type="function">
    <text evidence="1">DNA-dependent RNA polymerase catalyzes the transcription of DNA into RNA using the four ribonucleoside triphosphates as substrates.</text>
</comment>
<comment type="catalytic activity">
    <reaction evidence="1">
        <text>RNA(n) + a ribonucleoside 5'-triphosphate = RNA(n+1) + diphosphate</text>
        <dbReference type="Rhea" id="RHEA:21248"/>
        <dbReference type="Rhea" id="RHEA-COMP:14527"/>
        <dbReference type="Rhea" id="RHEA-COMP:17342"/>
        <dbReference type="ChEBI" id="CHEBI:33019"/>
        <dbReference type="ChEBI" id="CHEBI:61557"/>
        <dbReference type="ChEBI" id="CHEBI:140395"/>
        <dbReference type="EC" id="2.7.7.6"/>
    </reaction>
</comment>
<comment type="cofactor">
    <cofactor evidence="1">
        <name>Zn(2+)</name>
        <dbReference type="ChEBI" id="CHEBI:29105"/>
    </cofactor>
    <text evidence="1">Binds 1 Zn(2+) ion per subunit.</text>
</comment>
<comment type="subunit">
    <text evidence="1">In plastids the minimal PEP RNA polymerase catalytic core is composed of four subunits: alpha, beta, beta', and beta''. When a (nuclear-encoded) sigma factor is associated with the core the holoenzyme is formed, which can initiate transcription.</text>
</comment>
<comment type="subcellular location">
    <subcellularLocation>
        <location evidence="1">Plastid</location>
        <location evidence="1">Chloroplast</location>
    </subcellularLocation>
</comment>
<comment type="similarity">
    <text evidence="1">Belongs to the RNA polymerase beta' chain family. RpoC2 subfamily.</text>
</comment>
<proteinExistence type="inferred from homology"/>
<keyword id="KW-0150">Chloroplast</keyword>
<keyword id="KW-0240">DNA-directed RNA polymerase</keyword>
<keyword id="KW-0479">Metal-binding</keyword>
<keyword id="KW-0548">Nucleotidyltransferase</keyword>
<keyword id="KW-0934">Plastid</keyword>
<keyword id="KW-0804">Transcription</keyword>
<keyword id="KW-0808">Transferase</keyword>
<keyword id="KW-0862">Zinc</keyword>
<evidence type="ECO:0000255" key="1">
    <source>
        <dbReference type="HAMAP-Rule" id="MF_01324"/>
    </source>
</evidence>
<sequence>MEVLMAERANLVFHNKAIDGTAMKRLISRLIDHFGMAYTSHILDQVKTLGFQQATATSISLGIDDLLTIPSKGWLVQDAEQQSLILEKHHHYGNVHAVEKLRQSIEIWYATSEYLRQEMNPNFRMTDPFNPVHIMSFSGARGNASQVHQLVGMRGLMSDPQGQMIDLPIQSNLREGLSLTEYIISCYGARKGVVDTAVRTSDAGYLTRRLVEVVQHIVVRRTDCGTARGISVSPRNGMMPERFFIQTLIGRVLADDIYMGPRCIATRNQDIGIGLVNRFITFRAQPISIRTPFTCRSTSWICRLCYGRSPTHGDLVELGEAVGIIAGQSIGEPGTQLTLRTFHTGGVFTGGTAEHVRAPSNGKIKFNEDLVHPTRTRHGHPAFLCSIDLYVTIESEDILHNVNIPPKSLLLVQNDQYVESEQVIAEIRAGISTLNFKEKVRKHIYSDSDGEMHWSTDVYHAPEFTYGNVHLLPKTSHLWILLGGPCRSSLVYLSIHKDQDQMNAHFLSGKRRYTSNLSVTNDQARQKLFSSDFSVKKEDRIPDYSDLNRIICAGQYNLVYSPILHENSDLLSKRRRNKFIIPLHSIQELENELMPCSGISIEIPVNGIFRRNSILAYFDDPRYRRKSSGIIKYGTVETHSVIKKEDLLEYRGVKEFSPKYQMKVDLFFFIPEEVHILPGSSSIMVRNNSIVGVDTQITLNLRSRVGGLVRVERKKKQIELKIFSGDIHFPGETDKISRHTGVLIPPGTGKRNSKESKKVKNWIYVQRITPSKKRFFVLVRPVVTYEITDGINLATLFPPDPLQERDNVQLRIVNYILYGNGKPIRGISDTSIQLVRTCLVLNWNQDKKSSSCEEARASFVEIRTNGLIRHFLRINLVKSPISYIGKRNDPSGSGLLSDNGSDCTNINPFSSIYSYSKAKIQQSLNQPQGTIHTLLNRNKECQSLIILSAANCSRMGPFKDVKYHSVIKESIKKDPLIPIRNSLGPLGTSLPIENFYSSYHLITHNQILVTNYLQLDNLKQTFQVIKFHYYLMDENGKIFNPDPCRNIILNPFNLNWYFLHHNYCEETSKIISLGQFICENVCIAKNGPPLKSGQVILVQVDSIVIRSAKPYLATPGATVHGHYGETLYEGDTLVTFIYEKSRSGDITQGLPKVEQVLEVRSIDSISMNLEKRIEGWNKCITRILGIPWGFLIGAELTIAQSRISLVNKIQQVYRSQGVQIHNRHIEIIVRQITSKVLVSEDGMSNVFSPGELIGLLRAERMGRALEEAICYRVVLLGITRASLNTQSFISEASFQETARVLAKAALRGRIDWLKGLKENVVLGGVIPVGTGFKGLVHPSKQHNNIPLETKKKNLFEGEMRDILFHHRKLFDSCLSKNFHDIPEQSFIGFNDS</sequence>
<protein>
    <recommendedName>
        <fullName evidence="1">DNA-directed RNA polymerase subunit beta''</fullName>
        <ecNumber evidence="1">2.7.7.6</ecNumber>
    </recommendedName>
    <alternativeName>
        <fullName evidence="1">PEP</fullName>
    </alternativeName>
    <alternativeName>
        <fullName evidence="1">Plastid-encoded RNA polymerase subunit beta''</fullName>
        <shortName evidence="1">RNA polymerase subunit beta''</shortName>
    </alternativeName>
</protein>
<gene>
    <name evidence="1" type="primary">rpoC2</name>
</gene>
<dbReference type="EC" id="2.7.7.6" evidence="1"/>
<dbReference type="EMBL" id="AB240139">
    <property type="protein sequence ID" value="BAE47987.1"/>
    <property type="molecule type" value="Genomic_DNA"/>
</dbReference>
<dbReference type="RefSeq" id="YP_398849.2">
    <property type="nucleotide sequence ID" value="NC_007602.1"/>
</dbReference>
<dbReference type="SMR" id="Q33C48"/>
<dbReference type="GeneID" id="3776380"/>
<dbReference type="KEGG" id="nto:3776380"/>
<dbReference type="OrthoDB" id="498011at2759"/>
<dbReference type="GO" id="GO:0009507">
    <property type="term" value="C:chloroplast"/>
    <property type="evidence" value="ECO:0007669"/>
    <property type="project" value="UniProtKB-SubCell"/>
</dbReference>
<dbReference type="GO" id="GO:0000428">
    <property type="term" value="C:DNA-directed RNA polymerase complex"/>
    <property type="evidence" value="ECO:0007669"/>
    <property type="project" value="UniProtKB-KW"/>
</dbReference>
<dbReference type="GO" id="GO:0005739">
    <property type="term" value="C:mitochondrion"/>
    <property type="evidence" value="ECO:0007669"/>
    <property type="project" value="GOC"/>
</dbReference>
<dbReference type="GO" id="GO:0003677">
    <property type="term" value="F:DNA binding"/>
    <property type="evidence" value="ECO:0007669"/>
    <property type="project" value="UniProtKB-UniRule"/>
</dbReference>
<dbReference type="GO" id="GO:0003899">
    <property type="term" value="F:DNA-directed RNA polymerase activity"/>
    <property type="evidence" value="ECO:0007669"/>
    <property type="project" value="UniProtKB-UniRule"/>
</dbReference>
<dbReference type="GO" id="GO:0008270">
    <property type="term" value="F:zinc ion binding"/>
    <property type="evidence" value="ECO:0007669"/>
    <property type="project" value="UniProtKB-UniRule"/>
</dbReference>
<dbReference type="GO" id="GO:0006351">
    <property type="term" value="P:DNA-templated transcription"/>
    <property type="evidence" value="ECO:0007669"/>
    <property type="project" value="UniProtKB-UniRule"/>
</dbReference>
<dbReference type="CDD" id="cd02655">
    <property type="entry name" value="RNAP_beta'_C"/>
    <property type="match status" value="1"/>
</dbReference>
<dbReference type="FunFam" id="1.10.132.30:FF:000002">
    <property type="entry name" value="DNA-directed RNA polymerase subunit beta"/>
    <property type="match status" value="1"/>
</dbReference>
<dbReference type="FunFam" id="1.10.1790.20:FF:000002">
    <property type="entry name" value="DNA-directed RNA polymerase subunit beta"/>
    <property type="match status" value="1"/>
</dbReference>
<dbReference type="Gene3D" id="1.10.132.30">
    <property type="match status" value="1"/>
</dbReference>
<dbReference type="Gene3D" id="1.10.150.390">
    <property type="match status" value="1"/>
</dbReference>
<dbReference type="Gene3D" id="1.10.1790.20">
    <property type="match status" value="1"/>
</dbReference>
<dbReference type="Gene3D" id="1.10.274.100">
    <property type="entry name" value="RNA polymerase Rpb1, domain 3"/>
    <property type="match status" value="1"/>
</dbReference>
<dbReference type="HAMAP" id="MF_01324">
    <property type="entry name" value="RNApol_bact_RpoC2"/>
    <property type="match status" value="1"/>
</dbReference>
<dbReference type="InterPro" id="IPR012756">
    <property type="entry name" value="DNA-dir_RpoC2_beta_pp"/>
</dbReference>
<dbReference type="InterPro" id="IPR050254">
    <property type="entry name" value="RNA_pol_beta''_euk"/>
</dbReference>
<dbReference type="InterPro" id="IPR042102">
    <property type="entry name" value="RNA_pol_Rpb1_3_sf"/>
</dbReference>
<dbReference type="InterPro" id="IPR007083">
    <property type="entry name" value="RNA_pol_Rpb1_4"/>
</dbReference>
<dbReference type="InterPro" id="IPR007081">
    <property type="entry name" value="RNA_pol_Rpb1_5"/>
</dbReference>
<dbReference type="InterPro" id="IPR038120">
    <property type="entry name" value="Rpb1_funnel_sf"/>
</dbReference>
<dbReference type="NCBIfam" id="TIGR02388">
    <property type="entry name" value="rpoC2_cyan"/>
    <property type="match status" value="1"/>
</dbReference>
<dbReference type="PANTHER" id="PTHR34995">
    <property type="entry name" value="DNA-DIRECTED RNA POLYMERASE SUBUNIT BETA"/>
    <property type="match status" value="1"/>
</dbReference>
<dbReference type="PANTHER" id="PTHR34995:SF1">
    <property type="entry name" value="DNA-DIRECTED RNA POLYMERASE SUBUNIT BETA"/>
    <property type="match status" value="1"/>
</dbReference>
<dbReference type="Pfam" id="PF05000">
    <property type="entry name" value="RNA_pol_Rpb1_4"/>
    <property type="match status" value="1"/>
</dbReference>
<dbReference type="Pfam" id="PF04998">
    <property type="entry name" value="RNA_pol_Rpb1_5"/>
    <property type="match status" value="2"/>
</dbReference>
<dbReference type="SUPFAM" id="SSF64484">
    <property type="entry name" value="beta and beta-prime subunits of DNA dependent RNA-polymerase"/>
    <property type="match status" value="1"/>
</dbReference>
<organism>
    <name type="scientific">Nicotiana tomentosiformis</name>
    <name type="common">Tobacco</name>
    <dbReference type="NCBI Taxonomy" id="4098"/>
    <lineage>
        <taxon>Eukaryota</taxon>
        <taxon>Viridiplantae</taxon>
        <taxon>Streptophyta</taxon>
        <taxon>Embryophyta</taxon>
        <taxon>Tracheophyta</taxon>
        <taxon>Spermatophyta</taxon>
        <taxon>Magnoliopsida</taxon>
        <taxon>eudicotyledons</taxon>
        <taxon>Gunneridae</taxon>
        <taxon>Pentapetalae</taxon>
        <taxon>asterids</taxon>
        <taxon>lamiids</taxon>
        <taxon>Solanales</taxon>
        <taxon>Solanaceae</taxon>
        <taxon>Nicotianoideae</taxon>
        <taxon>Nicotianeae</taxon>
        <taxon>Nicotiana</taxon>
    </lineage>
</organism>
<feature type="chain" id="PRO_0000225335" description="DNA-directed RNA polymerase subunit beta''">
    <location>
        <begin position="1"/>
        <end position="1392"/>
    </location>
</feature>
<feature type="binding site" evidence="1">
    <location>
        <position position="224"/>
    </location>
    <ligand>
        <name>Zn(2+)</name>
        <dbReference type="ChEBI" id="CHEBI:29105"/>
    </ligand>
</feature>
<feature type="binding site" evidence="1">
    <location>
        <position position="295"/>
    </location>
    <ligand>
        <name>Zn(2+)</name>
        <dbReference type="ChEBI" id="CHEBI:29105"/>
    </ligand>
</feature>
<feature type="binding site" evidence="1">
    <location>
        <position position="302"/>
    </location>
    <ligand>
        <name>Zn(2+)</name>
        <dbReference type="ChEBI" id="CHEBI:29105"/>
    </ligand>
</feature>
<feature type="binding site" evidence="1">
    <location>
        <position position="305"/>
    </location>
    <ligand>
        <name>Zn(2+)</name>
        <dbReference type="ChEBI" id="CHEBI:29105"/>
    </ligand>
</feature>
<name>RPOC2_NICTO</name>
<geneLocation type="chloroplast"/>
<accession>Q33C48</accession>
<reference key="1">
    <citation type="journal article" date="2006" name="Mol. Genet. Genomics">
        <title>The chloroplast genome of Nicotiana sylvestris and Nicotiana tomentosiformis: complete sequencing confirms that the Nicotiana sylvestris progenitor is the maternal genome donor of Nicotiana tabacum.</title>
        <authorList>
            <person name="Yukawa M."/>
            <person name="Tsudzuki T."/>
            <person name="Sugiura M."/>
        </authorList>
    </citation>
    <scope>NUCLEOTIDE SEQUENCE [LARGE SCALE GENOMIC DNA]</scope>
</reference>